<dbReference type="EC" id="2.1.1.-" evidence="1"/>
<dbReference type="EMBL" id="AE005176">
    <property type="protein sequence ID" value="AAK04201.1"/>
    <property type="molecule type" value="Genomic_DNA"/>
</dbReference>
<dbReference type="PIR" id="G86637">
    <property type="entry name" value="G86637"/>
</dbReference>
<dbReference type="RefSeq" id="NP_266259.1">
    <property type="nucleotide sequence ID" value="NC_002662.1"/>
</dbReference>
<dbReference type="RefSeq" id="WP_010905116.1">
    <property type="nucleotide sequence ID" value="NC_002662.1"/>
</dbReference>
<dbReference type="SMR" id="Q9CJ97"/>
<dbReference type="PaxDb" id="272623-L104221"/>
<dbReference type="EnsemblBacteria" id="AAK04201">
    <property type="protein sequence ID" value="AAK04201"/>
    <property type="gene ID" value="L104221"/>
</dbReference>
<dbReference type="KEGG" id="lla:L104221"/>
<dbReference type="PATRIC" id="fig|272623.7.peg.117"/>
<dbReference type="eggNOG" id="COG2264">
    <property type="taxonomic scope" value="Bacteria"/>
</dbReference>
<dbReference type="HOGENOM" id="CLU_049382_0_1_9"/>
<dbReference type="OrthoDB" id="9785995at2"/>
<dbReference type="Proteomes" id="UP000002196">
    <property type="component" value="Chromosome"/>
</dbReference>
<dbReference type="GO" id="GO:0005737">
    <property type="term" value="C:cytoplasm"/>
    <property type="evidence" value="ECO:0007669"/>
    <property type="project" value="UniProtKB-SubCell"/>
</dbReference>
<dbReference type="GO" id="GO:0016279">
    <property type="term" value="F:protein-lysine N-methyltransferase activity"/>
    <property type="evidence" value="ECO:0007669"/>
    <property type="project" value="RHEA"/>
</dbReference>
<dbReference type="GO" id="GO:0032259">
    <property type="term" value="P:methylation"/>
    <property type="evidence" value="ECO:0007669"/>
    <property type="project" value="UniProtKB-KW"/>
</dbReference>
<dbReference type="CDD" id="cd02440">
    <property type="entry name" value="AdoMet_MTases"/>
    <property type="match status" value="1"/>
</dbReference>
<dbReference type="Gene3D" id="3.40.50.150">
    <property type="entry name" value="Vaccinia Virus protein VP39"/>
    <property type="match status" value="1"/>
</dbReference>
<dbReference type="HAMAP" id="MF_00735">
    <property type="entry name" value="Methyltr_PrmA"/>
    <property type="match status" value="1"/>
</dbReference>
<dbReference type="InterPro" id="IPR050078">
    <property type="entry name" value="Ribosomal_L11_MeTrfase_PrmA"/>
</dbReference>
<dbReference type="InterPro" id="IPR004498">
    <property type="entry name" value="Ribosomal_PrmA_MeTrfase"/>
</dbReference>
<dbReference type="InterPro" id="IPR029063">
    <property type="entry name" value="SAM-dependent_MTases_sf"/>
</dbReference>
<dbReference type="NCBIfam" id="TIGR00406">
    <property type="entry name" value="prmA"/>
    <property type="match status" value="1"/>
</dbReference>
<dbReference type="PANTHER" id="PTHR43648">
    <property type="entry name" value="ELECTRON TRANSFER FLAVOPROTEIN BETA SUBUNIT LYSINE METHYLTRANSFERASE"/>
    <property type="match status" value="1"/>
</dbReference>
<dbReference type="PANTHER" id="PTHR43648:SF1">
    <property type="entry name" value="ELECTRON TRANSFER FLAVOPROTEIN BETA SUBUNIT LYSINE METHYLTRANSFERASE"/>
    <property type="match status" value="1"/>
</dbReference>
<dbReference type="Pfam" id="PF06325">
    <property type="entry name" value="PrmA"/>
    <property type="match status" value="1"/>
</dbReference>
<dbReference type="PIRSF" id="PIRSF000401">
    <property type="entry name" value="RPL11_MTase"/>
    <property type="match status" value="1"/>
</dbReference>
<dbReference type="SUPFAM" id="SSF53335">
    <property type="entry name" value="S-adenosyl-L-methionine-dependent methyltransferases"/>
    <property type="match status" value="1"/>
</dbReference>
<evidence type="ECO:0000255" key="1">
    <source>
        <dbReference type="HAMAP-Rule" id="MF_00735"/>
    </source>
</evidence>
<comment type="function">
    <text evidence="1">Methylates ribosomal protein L11.</text>
</comment>
<comment type="catalytic activity">
    <reaction evidence="1">
        <text>L-lysyl-[protein] + 3 S-adenosyl-L-methionine = N(6),N(6),N(6)-trimethyl-L-lysyl-[protein] + 3 S-adenosyl-L-homocysteine + 3 H(+)</text>
        <dbReference type="Rhea" id="RHEA:54192"/>
        <dbReference type="Rhea" id="RHEA-COMP:9752"/>
        <dbReference type="Rhea" id="RHEA-COMP:13826"/>
        <dbReference type="ChEBI" id="CHEBI:15378"/>
        <dbReference type="ChEBI" id="CHEBI:29969"/>
        <dbReference type="ChEBI" id="CHEBI:57856"/>
        <dbReference type="ChEBI" id="CHEBI:59789"/>
        <dbReference type="ChEBI" id="CHEBI:61961"/>
    </reaction>
</comment>
<comment type="subcellular location">
    <subcellularLocation>
        <location evidence="1">Cytoplasm</location>
    </subcellularLocation>
</comment>
<comment type="similarity">
    <text evidence="1">Belongs to the methyltransferase superfamily. PrmA family.</text>
</comment>
<reference key="1">
    <citation type="journal article" date="2001" name="Genome Res.">
        <title>The complete genome sequence of the lactic acid bacterium Lactococcus lactis ssp. lactis IL1403.</title>
        <authorList>
            <person name="Bolotin A."/>
            <person name="Wincker P."/>
            <person name="Mauger S."/>
            <person name="Jaillon O."/>
            <person name="Malarme K."/>
            <person name="Weissenbach J."/>
            <person name="Ehrlich S.D."/>
            <person name="Sorokin A."/>
        </authorList>
    </citation>
    <scope>NUCLEOTIDE SEQUENCE [LARGE SCALE GENOMIC DNA]</scope>
    <source>
        <strain>IL1403</strain>
    </source>
</reference>
<keyword id="KW-0963">Cytoplasm</keyword>
<keyword id="KW-0489">Methyltransferase</keyword>
<keyword id="KW-1185">Reference proteome</keyword>
<keyword id="KW-0949">S-adenosyl-L-methionine</keyword>
<keyword id="KW-0808">Transferase</keyword>
<organism>
    <name type="scientific">Lactococcus lactis subsp. lactis (strain IL1403)</name>
    <name type="common">Streptococcus lactis</name>
    <dbReference type="NCBI Taxonomy" id="272623"/>
    <lineage>
        <taxon>Bacteria</taxon>
        <taxon>Bacillati</taxon>
        <taxon>Bacillota</taxon>
        <taxon>Bacilli</taxon>
        <taxon>Lactobacillales</taxon>
        <taxon>Streptococcaceae</taxon>
        <taxon>Lactococcus</taxon>
    </lineage>
</organism>
<feature type="chain" id="PRO_0000192270" description="Ribosomal protein L11 methyltransferase">
    <location>
        <begin position="1"/>
        <end position="317"/>
    </location>
</feature>
<feature type="binding site" evidence="1">
    <location>
        <position position="158"/>
    </location>
    <ligand>
        <name>S-adenosyl-L-methionine</name>
        <dbReference type="ChEBI" id="CHEBI:59789"/>
    </ligand>
</feature>
<feature type="binding site" evidence="1">
    <location>
        <position position="179"/>
    </location>
    <ligand>
        <name>S-adenosyl-L-methionine</name>
        <dbReference type="ChEBI" id="CHEBI:59789"/>
    </ligand>
</feature>
<feature type="binding site" evidence="1">
    <location>
        <position position="201"/>
    </location>
    <ligand>
        <name>S-adenosyl-L-methionine</name>
        <dbReference type="ChEBI" id="CHEBI:59789"/>
    </ligand>
</feature>
<feature type="binding site" evidence="1">
    <location>
        <position position="244"/>
    </location>
    <ligand>
        <name>S-adenosyl-L-methionine</name>
        <dbReference type="ChEBI" id="CHEBI:59789"/>
    </ligand>
</feature>
<name>PRMA_LACLA</name>
<sequence length="317" mass="34753">MNNWNSITIKISREAGEAISALLIEAGSAGVEINDSADYLNHEDQFGEVLPEIEQSDFVEITAYYPENMPIVELKAEIEHKIANLSDYFSLTGLSVTTNNLSETNWAEAWKKYFEPARITHDLTIVPSWTEDYVATGSEKLIRLDPGMAFGTGTHPTTKMSLYALEQVLRGGETLLDVGTGSGVLSVAASYLGAAEIFAYDIDEVAVRVALENIELNPGHEKIHVSANNLLEGIDKKADVIVANILADILVLMTEDAFRLVKEEGYLIMSGIIADKADMVIASAEKAGFFLETRMIQGEWNCLIFKKTENREGVIGG</sequence>
<proteinExistence type="inferred from homology"/>
<accession>Q9CJ97</accession>
<protein>
    <recommendedName>
        <fullName evidence="1">Ribosomal protein L11 methyltransferase</fullName>
        <shortName evidence="1">L11 Mtase</shortName>
        <ecNumber evidence="1">2.1.1.-</ecNumber>
    </recommendedName>
</protein>
<gene>
    <name evidence="1" type="primary">prmA</name>
    <name type="ordered locus">LL0103</name>
    <name type="ORF">L104221</name>
</gene>